<feature type="chain" id="PRO_0000398226" description="Lipoyl synthase, mitochondrial">
    <location>
        <begin position="1"/>
        <end position="291"/>
    </location>
</feature>
<feature type="domain" description="Radical SAM core" evidence="2">
    <location>
        <begin position="57"/>
        <end position="272"/>
    </location>
</feature>
<feature type="binding site" evidence="1">
    <location>
        <position position="45"/>
    </location>
    <ligand>
        <name>[4Fe-4S] cluster</name>
        <dbReference type="ChEBI" id="CHEBI:49883"/>
        <label>1</label>
    </ligand>
</feature>
<feature type="binding site" evidence="1">
    <location>
        <position position="50"/>
    </location>
    <ligand>
        <name>[4Fe-4S] cluster</name>
        <dbReference type="ChEBI" id="CHEBI:49883"/>
        <label>1</label>
    </ligand>
</feature>
<feature type="binding site" evidence="1">
    <location>
        <position position="56"/>
    </location>
    <ligand>
        <name>[4Fe-4S] cluster</name>
        <dbReference type="ChEBI" id="CHEBI:49883"/>
        <label>1</label>
    </ligand>
</feature>
<feature type="binding site" evidence="1">
    <location>
        <position position="71"/>
    </location>
    <ligand>
        <name>[4Fe-4S] cluster</name>
        <dbReference type="ChEBI" id="CHEBI:49883"/>
        <label>2</label>
        <note>4Fe-4S-S-AdoMet</note>
    </ligand>
</feature>
<feature type="binding site" evidence="1">
    <location>
        <position position="75"/>
    </location>
    <ligand>
        <name>[4Fe-4S] cluster</name>
        <dbReference type="ChEBI" id="CHEBI:49883"/>
        <label>2</label>
        <note>4Fe-4S-S-AdoMet</note>
    </ligand>
</feature>
<feature type="binding site" evidence="1">
    <location>
        <position position="78"/>
    </location>
    <ligand>
        <name>[4Fe-4S] cluster</name>
        <dbReference type="ChEBI" id="CHEBI:49883"/>
        <label>2</label>
        <note>4Fe-4S-S-AdoMet</note>
    </ligand>
</feature>
<feature type="binding site" evidence="1">
    <location>
        <position position="283"/>
    </location>
    <ligand>
        <name>[4Fe-4S] cluster</name>
        <dbReference type="ChEBI" id="CHEBI:49883"/>
        <label>1</label>
    </ligand>
</feature>
<comment type="function">
    <text evidence="1">Catalyzes the radical-mediated insertion of two sulfur atoms into the C-6 and C-8 positions of the octanoyl moiety bound to the lipoyl domains of lipoate-dependent enzymes, thereby converting the octanoylated domains into lipoylated derivatives.</text>
</comment>
<comment type="catalytic activity">
    <reaction evidence="1">
        <text>[[Fe-S] cluster scaffold protein carrying a second [4Fe-4S](2+) cluster] + N(6)-octanoyl-L-lysyl-[protein] + 2 oxidized [2Fe-2S]-[ferredoxin] + 2 S-adenosyl-L-methionine + 4 H(+) = [[Fe-S] cluster scaffold protein] + N(6)-[(R)-dihydrolipoyl]-L-lysyl-[protein] + 4 Fe(3+) + 2 hydrogen sulfide + 2 5'-deoxyadenosine + 2 L-methionine + 2 reduced [2Fe-2S]-[ferredoxin]</text>
        <dbReference type="Rhea" id="RHEA:16585"/>
        <dbReference type="Rhea" id="RHEA-COMP:9928"/>
        <dbReference type="Rhea" id="RHEA-COMP:10000"/>
        <dbReference type="Rhea" id="RHEA-COMP:10001"/>
        <dbReference type="Rhea" id="RHEA-COMP:10475"/>
        <dbReference type="Rhea" id="RHEA-COMP:14568"/>
        <dbReference type="Rhea" id="RHEA-COMP:14569"/>
        <dbReference type="ChEBI" id="CHEBI:15378"/>
        <dbReference type="ChEBI" id="CHEBI:17319"/>
        <dbReference type="ChEBI" id="CHEBI:29034"/>
        <dbReference type="ChEBI" id="CHEBI:29919"/>
        <dbReference type="ChEBI" id="CHEBI:33722"/>
        <dbReference type="ChEBI" id="CHEBI:33737"/>
        <dbReference type="ChEBI" id="CHEBI:33738"/>
        <dbReference type="ChEBI" id="CHEBI:57844"/>
        <dbReference type="ChEBI" id="CHEBI:59789"/>
        <dbReference type="ChEBI" id="CHEBI:78809"/>
        <dbReference type="ChEBI" id="CHEBI:83100"/>
        <dbReference type="EC" id="2.8.1.8"/>
    </reaction>
</comment>
<comment type="cofactor">
    <cofactor evidence="1">
        <name>[4Fe-4S] cluster</name>
        <dbReference type="ChEBI" id="CHEBI:49883"/>
    </cofactor>
    <text evidence="1">Binds 2 [4Fe-4S] clusters per subunit. One cluster is coordinated with 3 cysteines and an exchangeable S-adenosyl-L-methionine.</text>
</comment>
<comment type="pathway">
    <text evidence="1">Protein modification; protein lipoylation via endogenous pathway; protein N(6)-(lipoyl)lysine from octanoyl-[acyl-carrier-protein]: step 2/2.</text>
</comment>
<comment type="subcellular location">
    <subcellularLocation>
        <location evidence="1">Mitochondrion</location>
    </subcellularLocation>
</comment>
<comment type="miscellaneous">
    <text evidence="1">This protein may be expected to contain an N-terminal transit peptide but none has been predicted.</text>
</comment>
<comment type="similarity">
    <text evidence="1">Belongs to the radical SAM superfamily. Lipoyl synthase family.</text>
</comment>
<accession>A7TDI2</accession>
<gene>
    <name type="ORF">v1g225637</name>
</gene>
<keyword id="KW-0004">4Fe-4S</keyword>
<keyword id="KW-0408">Iron</keyword>
<keyword id="KW-0411">Iron-sulfur</keyword>
<keyword id="KW-0479">Metal-binding</keyword>
<keyword id="KW-0496">Mitochondrion</keyword>
<keyword id="KW-1185">Reference proteome</keyword>
<keyword id="KW-0949">S-adenosyl-L-methionine</keyword>
<keyword id="KW-0808">Transferase</keyword>
<sequence length="291" mass="33132">MNTVTENVFPPREPKPKWLRVKLPTGKNYTELRGLVDKYKLNTICASGSCPNMGECWGEGTATFMILGNICTRSCGFCGVKTGRPETVDWDEPEKVARSIKLMKIKHAVITSVDRDDLKDMGSIIWAETVKAIRRMNPNTTLETLIPDFQGNTRNLDRIIEVAPEVVSHNMETVKRLTREVRIQAKYEKSLEVLRYLKAQGIKRTKSGIMLGLGEKEEEVIQVLHDLRDANVDIVTIGQYLQPSKKHLPVKEYISPEQFEKYEKIGKELGFRHVESGALVRSSYHAEKHIH</sequence>
<proteinExistence type="inferred from homology"/>
<dbReference type="EC" id="2.8.1.8" evidence="1"/>
<dbReference type="EMBL" id="DS477892">
    <property type="protein sequence ID" value="EDO25859.1"/>
    <property type="molecule type" value="Genomic_DNA"/>
</dbReference>
<dbReference type="RefSeq" id="XP_001617959.1">
    <property type="nucleotide sequence ID" value="XM_001617909.1"/>
</dbReference>
<dbReference type="SMR" id="A7TDI2"/>
<dbReference type="STRING" id="45351.A7TDI2"/>
<dbReference type="EnsemblMetazoa" id="EDO25859">
    <property type="protein sequence ID" value="EDO25859"/>
    <property type="gene ID" value="NEMVEDRAFT_v1g225637"/>
</dbReference>
<dbReference type="KEGG" id="nve:5496152"/>
<dbReference type="eggNOG" id="KOG2672">
    <property type="taxonomic scope" value="Eukaryota"/>
</dbReference>
<dbReference type="HOGENOM" id="CLU_033144_2_1_1"/>
<dbReference type="InParanoid" id="A7TDI2"/>
<dbReference type="OMA" id="LKMANSH"/>
<dbReference type="PhylomeDB" id="A7TDI2"/>
<dbReference type="UniPathway" id="UPA00538">
    <property type="reaction ID" value="UER00593"/>
</dbReference>
<dbReference type="Proteomes" id="UP000001593">
    <property type="component" value="Unassembled WGS sequence"/>
</dbReference>
<dbReference type="GO" id="GO:0005739">
    <property type="term" value="C:mitochondrion"/>
    <property type="evidence" value="ECO:0007669"/>
    <property type="project" value="UniProtKB-SubCell"/>
</dbReference>
<dbReference type="GO" id="GO:0051539">
    <property type="term" value="F:4 iron, 4 sulfur cluster binding"/>
    <property type="evidence" value="ECO:0007669"/>
    <property type="project" value="UniProtKB-UniRule"/>
</dbReference>
<dbReference type="GO" id="GO:0016992">
    <property type="term" value="F:lipoate synthase activity"/>
    <property type="evidence" value="ECO:0007669"/>
    <property type="project" value="UniProtKB-UniRule"/>
</dbReference>
<dbReference type="GO" id="GO:0046872">
    <property type="term" value="F:metal ion binding"/>
    <property type="evidence" value="ECO:0007669"/>
    <property type="project" value="UniProtKB-KW"/>
</dbReference>
<dbReference type="CDD" id="cd01335">
    <property type="entry name" value="Radical_SAM"/>
    <property type="match status" value="1"/>
</dbReference>
<dbReference type="FunFam" id="3.20.20.70:FF:000271">
    <property type="entry name" value="Lipoyl synthase"/>
    <property type="match status" value="1"/>
</dbReference>
<dbReference type="Gene3D" id="3.20.20.70">
    <property type="entry name" value="Aldolase class I"/>
    <property type="match status" value="1"/>
</dbReference>
<dbReference type="HAMAP" id="MF_00206">
    <property type="entry name" value="Lipoyl_synth"/>
    <property type="match status" value="1"/>
</dbReference>
<dbReference type="InterPro" id="IPR013785">
    <property type="entry name" value="Aldolase_TIM"/>
</dbReference>
<dbReference type="InterPro" id="IPR006638">
    <property type="entry name" value="Elp3/MiaA/NifB-like_rSAM"/>
</dbReference>
<dbReference type="InterPro" id="IPR003698">
    <property type="entry name" value="Lipoyl_synth"/>
</dbReference>
<dbReference type="InterPro" id="IPR007197">
    <property type="entry name" value="rSAM"/>
</dbReference>
<dbReference type="NCBIfam" id="TIGR00510">
    <property type="entry name" value="lipA"/>
    <property type="match status" value="1"/>
</dbReference>
<dbReference type="NCBIfam" id="NF004019">
    <property type="entry name" value="PRK05481.1"/>
    <property type="match status" value="1"/>
</dbReference>
<dbReference type="NCBIfam" id="NF009544">
    <property type="entry name" value="PRK12928.1"/>
    <property type="match status" value="1"/>
</dbReference>
<dbReference type="PANTHER" id="PTHR10949">
    <property type="entry name" value="LIPOYL SYNTHASE"/>
    <property type="match status" value="1"/>
</dbReference>
<dbReference type="PANTHER" id="PTHR10949:SF0">
    <property type="entry name" value="LIPOYL SYNTHASE, MITOCHONDRIAL"/>
    <property type="match status" value="1"/>
</dbReference>
<dbReference type="Pfam" id="PF04055">
    <property type="entry name" value="Radical_SAM"/>
    <property type="match status" value="1"/>
</dbReference>
<dbReference type="PIRSF" id="PIRSF005963">
    <property type="entry name" value="Lipoyl_synth"/>
    <property type="match status" value="1"/>
</dbReference>
<dbReference type="SFLD" id="SFLDF00271">
    <property type="entry name" value="lipoyl_synthase"/>
    <property type="match status" value="1"/>
</dbReference>
<dbReference type="SFLD" id="SFLDG01058">
    <property type="entry name" value="lipoyl_synthase_like"/>
    <property type="match status" value="1"/>
</dbReference>
<dbReference type="SMART" id="SM00729">
    <property type="entry name" value="Elp3"/>
    <property type="match status" value="1"/>
</dbReference>
<dbReference type="SUPFAM" id="SSF102114">
    <property type="entry name" value="Radical SAM enzymes"/>
    <property type="match status" value="1"/>
</dbReference>
<dbReference type="PROSITE" id="PS51918">
    <property type="entry name" value="RADICAL_SAM"/>
    <property type="match status" value="1"/>
</dbReference>
<protein>
    <recommendedName>
        <fullName evidence="1">Lipoyl synthase, mitochondrial</fullName>
        <ecNumber evidence="1">2.8.1.8</ecNumber>
    </recommendedName>
    <alternativeName>
        <fullName evidence="1">Lipoate synthase</fullName>
        <shortName evidence="1">LS</shortName>
        <shortName evidence="1">Lip-syn</shortName>
    </alternativeName>
    <alternativeName>
        <fullName evidence="1">Lipoic acid synthase</fullName>
    </alternativeName>
</protein>
<evidence type="ECO:0000255" key="1">
    <source>
        <dbReference type="HAMAP-Rule" id="MF_03123"/>
    </source>
</evidence>
<evidence type="ECO:0000255" key="2">
    <source>
        <dbReference type="PROSITE-ProRule" id="PRU01266"/>
    </source>
</evidence>
<name>LIAS_NEMVE</name>
<reference key="1">
    <citation type="journal article" date="2007" name="Science">
        <title>Sea anemone genome reveals ancestral eumetazoan gene repertoire and genomic organization.</title>
        <authorList>
            <person name="Putnam N.H."/>
            <person name="Srivastava M."/>
            <person name="Hellsten U."/>
            <person name="Dirks B."/>
            <person name="Chapman J."/>
            <person name="Salamov A."/>
            <person name="Terry A."/>
            <person name="Shapiro H."/>
            <person name="Lindquist E."/>
            <person name="Kapitonov V.V."/>
            <person name="Jurka J."/>
            <person name="Genikhovich G."/>
            <person name="Grigoriev I.V."/>
            <person name="Lucas S.M."/>
            <person name="Steele R.E."/>
            <person name="Finnerty J.R."/>
            <person name="Technau U."/>
            <person name="Martindale M.Q."/>
            <person name="Rokhsar D.S."/>
        </authorList>
    </citation>
    <scope>NUCLEOTIDE SEQUENCE [LARGE SCALE GENOMIC DNA]</scope>
    <source>
        <strain>CH2 X CH6</strain>
    </source>
</reference>
<organism>
    <name type="scientific">Nematostella vectensis</name>
    <name type="common">Starlet sea anemone</name>
    <dbReference type="NCBI Taxonomy" id="45351"/>
    <lineage>
        <taxon>Eukaryota</taxon>
        <taxon>Metazoa</taxon>
        <taxon>Cnidaria</taxon>
        <taxon>Anthozoa</taxon>
        <taxon>Hexacorallia</taxon>
        <taxon>Actiniaria</taxon>
        <taxon>Edwardsiidae</taxon>
        <taxon>Nematostella</taxon>
    </lineage>
</organism>